<organism>
    <name type="scientific">Columba livia</name>
    <name type="common">Rock dove</name>
    <dbReference type="NCBI Taxonomy" id="8932"/>
    <lineage>
        <taxon>Eukaryota</taxon>
        <taxon>Metazoa</taxon>
        <taxon>Chordata</taxon>
        <taxon>Craniata</taxon>
        <taxon>Vertebrata</taxon>
        <taxon>Euteleostomi</taxon>
        <taxon>Archelosauria</taxon>
        <taxon>Archosauria</taxon>
        <taxon>Dinosauria</taxon>
        <taxon>Saurischia</taxon>
        <taxon>Theropoda</taxon>
        <taxon>Coelurosauria</taxon>
        <taxon>Aves</taxon>
        <taxon>Neognathae</taxon>
        <taxon>Neoaves</taxon>
        <taxon>Columbimorphae</taxon>
        <taxon>Columbiformes</taxon>
        <taxon>Columbidae</taxon>
        <taxon>Columba</taxon>
    </lineage>
</organism>
<evidence type="ECO:0000250" key="1"/>
<evidence type="ECO:0000255" key="2">
    <source>
        <dbReference type="PROSITE-ProRule" id="PRU01245"/>
    </source>
</evidence>
<evidence type="ECO:0000305" key="3"/>
<gene>
    <name type="primary">CP35</name>
</gene>
<name>ANX11_COLLI</name>
<proteinExistence type="evidence at transcript level"/>
<sequence length="341" mass="38451">MAVVSEFLKQAWFMENLEQECIKCTQCVHGVPQQTNFDPSADVVALEKAMTAKGVDEATIIDIMTTRTNAQRPRIKAAYHKAKGKSLEEAMKRVLKSHLEDVVVALLKTPAQFDAEELRACMKGHGTDEDTLIEILASRNNKEIREACRYYKEVLKRDLTQDIISDTSGDFQKALVSLAKADRCENPHVNDELAEKDARALYEAGEQKKGTDINVFVTVLTARSYPHSEVFQKYTKYSKHDMNKAVDMEMKGDIEKCLTALVKCATSKPAFFAEKLHMAMKGFGTQHRDLIRIMVSRHEVDMNEIKGYYKKMYGISLCQAIMDELKGGYETILVALCGSDN</sequence>
<accession>P14950</accession>
<dbReference type="EMBL" id="M22635">
    <property type="protein sequence ID" value="AAA49448.1"/>
    <property type="molecule type" value="mRNA"/>
</dbReference>
<dbReference type="PIR" id="A40153">
    <property type="entry name" value="LUPY1"/>
</dbReference>
<dbReference type="RefSeq" id="NP_001269775.1">
    <property type="nucleotide sequence ID" value="NM_001282846.1"/>
</dbReference>
<dbReference type="SMR" id="P14950"/>
<dbReference type="GeneID" id="102093306"/>
<dbReference type="KEGG" id="clv:102093306"/>
<dbReference type="eggNOG" id="KOG0819">
    <property type="taxonomic scope" value="Eukaryota"/>
</dbReference>
<dbReference type="OrthoDB" id="237830at8782"/>
<dbReference type="GO" id="GO:0016323">
    <property type="term" value="C:basolateral plasma membrane"/>
    <property type="evidence" value="ECO:0007669"/>
    <property type="project" value="UniProtKB-SubCell"/>
</dbReference>
<dbReference type="GO" id="GO:0005929">
    <property type="term" value="C:cilium"/>
    <property type="evidence" value="ECO:0007669"/>
    <property type="project" value="UniProtKB-SubCell"/>
</dbReference>
<dbReference type="GO" id="GO:0005737">
    <property type="term" value="C:cytoplasm"/>
    <property type="evidence" value="ECO:0007669"/>
    <property type="project" value="UniProtKB-SubCell"/>
</dbReference>
<dbReference type="GO" id="GO:0005634">
    <property type="term" value="C:nucleus"/>
    <property type="evidence" value="ECO:0007669"/>
    <property type="project" value="UniProtKB-SubCell"/>
</dbReference>
<dbReference type="GO" id="GO:0012506">
    <property type="term" value="C:vesicle membrane"/>
    <property type="evidence" value="ECO:0007669"/>
    <property type="project" value="TreeGrafter"/>
</dbReference>
<dbReference type="GO" id="GO:0005509">
    <property type="term" value="F:calcium ion binding"/>
    <property type="evidence" value="ECO:0007669"/>
    <property type="project" value="InterPro"/>
</dbReference>
<dbReference type="GO" id="GO:0005544">
    <property type="term" value="F:calcium-dependent phospholipid binding"/>
    <property type="evidence" value="ECO:0007669"/>
    <property type="project" value="UniProtKB-KW"/>
</dbReference>
<dbReference type="GO" id="GO:0001786">
    <property type="term" value="F:phosphatidylserine binding"/>
    <property type="evidence" value="ECO:0007669"/>
    <property type="project" value="TreeGrafter"/>
</dbReference>
<dbReference type="GO" id="GO:0019834">
    <property type="term" value="F:phospholipase A2 inhibitor activity"/>
    <property type="evidence" value="ECO:0007669"/>
    <property type="project" value="UniProtKB-KW"/>
</dbReference>
<dbReference type="GO" id="GO:0071385">
    <property type="term" value="P:cellular response to glucocorticoid stimulus"/>
    <property type="evidence" value="ECO:0007669"/>
    <property type="project" value="TreeGrafter"/>
</dbReference>
<dbReference type="GO" id="GO:0006909">
    <property type="term" value="P:phagocytosis"/>
    <property type="evidence" value="ECO:0007669"/>
    <property type="project" value="TreeGrafter"/>
</dbReference>
<dbReference type="GO" id="GO:0007165">
    <property type="term" value="P:signal transduction"/>
    <property type="evidence" value="ECO:0007669"/>
    <property type="project" value="TreeGrafter"/>
</dbReference>
<dbReference type="FunFam" id="1.10.220.10:FF:000001">
    <property type="entry name" value="Annexin"/>
    <property type="match status" value="1"/>
</dbReference>
<dbReference type="FunFam" id="1.10.220.10:FF:000002">
    <property type="entry name" value="Annexin"/>
    <property type="match status" value="1"/>
</dbReference>
<dbReference type="FunFam" id="1.10.220.10:FF:000003">
    <property type="entry name" value="Annexin"/>
    <property type="match status" value="1"/>
</dbReference>
<dbReference type="FunFam" id="1.10.220.10:FF:000007">
    <property type="entry name" value="Annexin"/>
    <property type="match status" value="1"/>
</dbReference>
<dbReference type="Gene3D" id="1.10.220.10">
    <property type="entry name" value="Annexin"/>
    <property type="match status" value="4"/>
</dbReference>
<dbReference type="InterPro" id="IPR001464">
    <property type="entry name" value="Annexin"/>
</dbReference>
<dbReference type="InterPro" id="IPR018502">
    <property type="entry name" value="Annexin_repeat"/>
</dbReference>
<dbReference type="InterPro" id="IPR018252">
    <property type="entry name" value="Annexin_repeat_CS"/>
</dbReference>
<dbReference type="InterPro" id="IPR037104">
    <property type="entry name" value="Annexin_sf"/>
</dbReference>
<dbReference type="InterPro" id="IPR002388">
    <property type="entry name" value="ANX1"/>
</dbReference>
<dbReference type="PANTHER" id="PTHR10502">
    <property type="entry name" value="ANNEXIN"/>
    <property type="match status" value="1"/>
</dbReference>
<dbReference type="PANTHER" id="PTHR10502:SF17">
    <property type="entry name" value="ANNEXIN A1"/>
    <property type="match status" value="1"/>
</dbReference>
<dbReference type="Pfam" id="PF00191">
    <property type="entry name" value="Annexin"/>
    <property type="match status" value="4"/>
</dbReference>
<dbReference type="PRINTS" id="PR00196">
    <property type="entry name" value="ANNEXIN"/>
</dbReference>
<dbReference type="PRINTS" id="PR00197">
    <property type="entry name" value="ANNEXINI"/>
</dbReference>
<dbReference type="SMART" id="SM00335">
    <property type="entry name" value="ANX"/>
    <property type="match status" value="4"/>
</dbReference>
<dbReference type="SUPFAM" id="SSF47874">
    <property type="entry name" value="Annexin"/>
    <property type="match status" value="1"/>
</dbReference>
<dbReference type="PROSITE" id="PS00223">
    <property type="entry name" value="ANNEXIN_1"/>
    <property type="match status" value="3"/>
</dbReference>
<dbReference type="PROSITE" id="PS51897">
    <property type="entry name" value="ANNEXIN_2"/>
    <property type="match status" value="4"/>
</dbReference>
<protein>
    <recommendedName>
        <fullName>Annexin A1 isoform p35</fullName>
    </recommendedName>
    <alternativeName>
        <fullName>Annexin I isoform p35</fullName>
    </alternativeName>
    <alternativeName>
        <fullName>Calpactin II</fullName>
    </alternativeName>
    <alternativeName>
        <fullName>Calpactin-2</fullName>
    </alternativeName>
    <alternativeName>
        <fullName>Chromobindin-9</fullName>
    </alternativeName>
    <alternativeName>
        <fullName>Lipocortin I</fullName>
    </alternativeName>
    <alternativeName>
        <fullName>Phospholipase A2 inhibitory protein</fullName>
    </alternativeName>
</protein>
<feature type="chain" id="PRO_0000067467" description="Annexin A1 isoform p35">
    <location>
        <begin position="1"/>
        <end position="341"/>
    </location>
</feature>
<feature type="repeat" description="Annexin 1" evidence="2">
    <location>
        <begin position="37"/>
        <end position="108"/>
    </location>
</feature>
<feature type="repeat" description="Annexin 2" evidence="2">
    <location>
        <begin position="109"/>
        <end position="180"/>
    </location>
</feature>
<feature type="repeat" description="Annexin 3" evidence="2">
    <location>
        <begin position="192"/>
        <end position="263"/>
    </location>
</feature>
<feature type="repeat" description="Annexin 4" evidence="2">
    <location>
        <begin position="267"/>
        <end position="338"/>
    </location>
</feature>
<comment type="function">
    <text>Calcium/phospholipid-binding protein which promotes membrane fusion and is involved in exocytosis. This protein regulates phospholipase A2 activity. It seems to bind from two to four calcium ions with high affinity.</text>
</comment>
<comment type="subcellular location">
    <subcellularLocation>
        <location evidence="1">Nucleus</location>
    </subcellularLocation>
    <subcellularLocation>
        <location evidence="1">Cytoplasm</location>
    </subcellularLocation>
    <subcellularLocation>
        <location evidence="1">Cell projection</location>
        <location evidence="1">Cilium</location>
    </subcellularLocation>
    <subcellularLocation>
        <location evidence="1">Basolateral cell membrane</location>
    </subcellularLocation>
    <text evidence="1">Found in the cilium, nucleus and basolateral cell membrane of ciliated cells in the tracheal endothelium. Found in the cytoplasm of type II pneumocytes and alveolar macrophages.</text>
</comment>
<comment type="induction">
    <text>Major prolactin-inducible protein in pigeon cropsac.</text>
</comment>
<comment type="domain">
    <text>A pair of annexin repeats may form one binding site for calcium and phospholipid.</text>
</comment>
<comment type="PTM">
    <text>In contrast to mammalian homologs, does not contain a tyrosine phosphorylation site in the N-terminal part.</text>
</comment>
<comment type="miscellaneous">
    <text>In pigeons, two isoforms of annexin-I are encoded by the differentially regulated genes CP35 and CP37.</text>
</comment>
<comment type="similarity">
    <text evidence="2 3">Belongs to the annexin family.</text>
</comment>
<keyword id="KW-0041">Annexin</keyword>
<keyword id="KW-0106">Calcium</keyword>
<keyword id="KW-0111">Calcium/phospholipid-binding</keyword>
<keyword id="KW-1003">Cell membrane</keyword>
<keyword id="KW-0966">Cell projection</keyword>
<keyword id="KW-0969">Cilium</keyword>
<keyword id="KW-0963">Cytoplasm</keyword>
<keyword id="KW-0472">Membrane</keyword>
<keyword id="KW-0539">Nucleus</keyword>
<keyword id="KW-0593">Phospholipase A2 inhibitor</keyword>
<keyword id="KW-0677">Repeat</keyword>
<reference key="1">
    <citation type="journal article" date="1989" name="Mol. Endocrinol.">
        <title>A prolactin-inducible gene product which is a member of the calpactin/lipocortin family.</title>
        <authorList>
            <person name="Horseman N.D."/>
        </authorList>
    </citation>
    <scope>NUCLEOTIDE SEQUENCE [MRNA]</scope>
</reference>
<reference key="2">
    <citation type="journal article" date="1991" name="Gene">
        <title>Structure of the gene encoding columbid annexin Icp35.</title>
        <authorList>
            <person name="Hitti Y.S."/>
            <person name="Horseman N.D."/>
        </authorList>
    </citation>
    <scope>NUCLEOTIDE SEQUENCE [MRNA] OF 1-53</scope>
</reference>